<keyword id="KW-0963">Cytoplasm</keyword>
<keyword id="KW-0349">Heme</keyword>
<keyword id="KW-0376">Hydrogen peroxide</keyword>
<keyword id="KW-0408">Iron</keyword>
<keyword id="KW-0479">Metal-binding</keyword>
<keyword id="KW-0560">Oxidoreductase</keyword>
<keyword id="KW-0575">Peroxidase</keyword>
<keyword id="KW-0576">Peroxisome</keyword>
<sequence>MDPYKYRSSSAFNTPFWTTNSGAPVWNNNSSLTVGTRGPILLEDYHLVEKLANFDRERIPERVVHARGASAKGFFEVTHDISHLTCADFLRAPGVQTPVIVRFSTVIHERGSPETLRDPRGFAVKFYTREGNFDLVGNNFPVFFVRDGMKFPDMVHALKPNPKSHIQENWRILDFFSHHPESLHMFTFLFDDLGVPQDYRHMEGSGVNTYTLINKAGKAQYVKFHWKPTCGVKCLLEDEAIKVGGANHSHATKDLYDSISAGNYPEWKLFIQIIEPDHEDKFDFDPLDVTKTWPEDIIPLMPVGRLVLNKNIDNFFAENEQLAFCPALIVPGVYYSDDKLLQTRIFSYADTQRHRLGPNYLQLPPNAPKCAHHNNHHEGLMNFMHRDEEVNYFPSRFDPVRHAERHPIPPPVLTGKRDRCMIEKENNFKQPGERYRTFAPDRQERFVCRWVDALSDPRVTHEIRSIWISYWTQADKSLGQKLASRLNVRPTM</sequence>
<protein>
    <recommendedName>
        <fullName>Catalase</fullName>
        <ecNumber evidence="4">1.11.1.6</ecNumber>
    </recommendedName>
</protein>
<dbReference type="EC" id="1.11.1.6" evidence="4"/>
<dbReference type="EMBL" id="Z99633">
    <property type="protein sequence ID" value="CAB16749.1"/>
    <property type="molecule type" value="mRNA"/>
</dbReference>
<dbReference type="SMR" id="O24339"/>
<dbReference type="PeroxiBase" id="6267">
    <property type="entry name" value="SalpKat1"/>
</dbReference>
<dbReference type="GO" id="GO:0005829">
    <property type="term" value="C:cytosol"/>
    <property type="evidence" value="ECO:0007669"/>
    <property type="project" value="UniProtKB-SubCell"/>
</dbReference>
<dbReference type="GO" id="GO:0005782">
    <property type="term" value="C:peroxisomal matrix"/>
    <property type="evidence" value="ECO:0007669"/>
    <property type="project" value="UniProtKB-SubCell"/>
</dbReference>
<dbReference type="GO" id="GO:0005886">
    <property type="term" value="C:plasma membrane"/>
    <property type="evidence" value="ECO:0007669"/>
    <property type="project" value="TreeGrafter"/>
</dbReference>
<dbReference type="GO" id="GO:0004096">
    <property type="term" value="F:catalase activity"/>
    <property type="evidence" value="ECO:0007669"/>
    <property type="project" value="UniProtKB-EC"/>
</dbReference>
<dbReference type="GO" id="GO:0020037">
    <property type="term" value="F:heme binding"/>
    <property type="evidence" value="ECO:0007669"/>
    <property type="project" value="InterPro"/>
</dbReference>
<dbReference type="GO" id="GO:0046872">
    <property type="term" value="F:metal ion binding"/>
    <property type="evidence" value="ECO:0007669"/>
    <property type="project" value="UniProtKB-KW"/>
</dbReference>
<dbReference type="GO" id="GO:0042744">
    <property type="term" value="P:hydrogen peroxide catabolic process"/>
    <property type="evidence" value="ECO:0007669"/>
    <property type="project" value="UniProtKB-KW"/>
</dbReference>
<dbReference type="GO" id="GO:0042542">
    <property type="term" value="P:response to hydrogen peroxide"/>
    <property type="evidence" value="ECO:0007669"/>
    <property type="project" value="TreeGrafter"/>
</dbReference>
<dbReference type="CDD" id="cd08154">
    <property type="entry name" value="catalase_clade_1"/>
    <property type="match status" value="1"/>
</dbReference>
<dbReference type="FunFam" id="2.40.180.10:FF:000002">
    <property type="entry name" value="Catalase"/>
    <property type="match status" value="1"/>
</dbReference>
<dbReference type="Gene3D" id="2.40.180.10">
    <property type="entry name" value="Catalase core domain"/>
    <property type="match status" value="1"/>
</dbReference>
<dbReference type="InterPro" id="IPR018028">
    <property type="entry name" value="Catalase"/>
</dbReference>
<dbReference type="InterPro" id="IPR024708">
    <property type="entry name" value="Catalase_AS"/>
</dbReference>
<dbReference type="InterPro" id="IPR024711">
    <property type="entry name" value="Catalase_clade1/3"/>
</dbReference>
<dbReference type="InterPro" id="IPR011614">
    <property type="entry name" value="Catalase_core"/>
</dbReference>
<dbReference type="InterPro" id="IPR002226">
    <property type="entry name" value="Catalase_haem_BS"/>
</dbReference>
<dbReference type="InterPro" id="IPR010582">
    <property type="entry name" value="Catalase_immune_responsive"/>
</dbReference>
<dbReference type="InterPro" id="IPR020835">
    <property type="entry name" value="Catalase_sf"/>
</dbReference>
<dbReference type="PANTHER" id="PTHR11465">
    <property type="entry name" value="CATALASE"/>
    <property type="match status" value="1"/>
</dbReference>
<dbReference type="PANTHER" id="PTHR11465:SF23">
    <property type="entry name" value="CATALASE-2"/>
    <property type="match status" value="1"/>
</dbReference>
<dbReference type="Pfam" id="PF00199">
    <property type="entry name" value="Catalase"/>
    <property type="match status" value="1"/>
</dbReference>
<dbReference type="Pfam" id="PF06628">
    <property type="entry name" value="Catalase-rel"/>
    <property type="match status" value="1"/>
</dbReference>
<dbReference type="PIRSF" id="PIRSF038928">
    <property type="entry name" value="Catalase_clade1-3"/>
    <property type="match status" value="1"/>
</dbReference>
<dbReference type="PRINTS" id="PR00067">
    <property type="entry name" value="CATALASE"/>
</dbReference>
<dbReference type="SMART" id="SM01060">
    <property type="entry name" value="Catalase"/>
    <property type="match status" value="1"/>
</dbReference>
<dbReference type="SUPFAM" id="SSF56634">
    <property type="entry name" value="Heme-dependent catalase-like"/>
    <property type="match status" value="1"/>
</dbReference>
<dbReference type="PROSITE" id="PS00437">
    <property type="entry name" value="CATALASE_1"/>
    <property type="match status" value="1"/>
</dbReference>
<dbReference type="PROSITE" id="PS00438">
    <property type="entry name" value="CATALASE_2"/>
    <property type="match status" value="1"/>
</dbReference>
<dbReference type="PROSITE" id="PS51402">
    <property type="entry name" value="CATALASE_3"/>
    <property type="match status" value="1"/>
</dbReference>
<evidence type="ECO:0000250" key="1"/>
<evidence type="ECO:0000250" key="2">
    <source>
        <dbReference type="UniProtKB" id="P04040"/>
    </source>
</evidence>
<evidence type="ECO:0000250" key="3">
    <source>
        <dbReference type="UniProtKB" id="P25819"/>
    </source>
</evidence>
<evidence type="ECO:0000255" key="4">
    <source>
        <dbReference type="PROSITE-ProRule" id="PRU10013"/>
    </source>
</evidence>
<evidence type="ECO:0000305" key="5"/>
<organism>
    <name type="scientific">Soldanella alpina</name>
    <name type="common">Alpine snowbell</name>
    <dbReference type="NCBI Taxonomy" id="66308"/>
    <lineage>
        <taxon>Eukaryota</taxon>
        <taxon>Viridiplantae</taxon>
        <taxon>Streptophyta</taxon>
        <taxon>Embryophyta</taxon>
        <taxon>Tracheophyta</taxon>
        <taxon>Spermatophyta</taxon>
        <taxon>Magnoliopsida</taxon>
        <taxon>eudicotyledons</taxon>
        <taxon>Gunneridae</taxon>
        <taxon>Pentapetalae</taxon>
        <taxon>asterids</taxon>
        <taxon>Ericales</taxon>
        <taxon>Primulaceae</taxon>
        <taxon>Soldanella</taxon>
    </lineage>
</organism>
<proteinExistence type="evidence at transcript level"/>
<reference key="1">
    <citation type="submission" date="1997-09" db="EMBL/GenBank/DDBJ databases">
        <authorList>
            <person name="Schmidt M."/>
        </authorList>
    </citation>
    <scope>NUCLEOTIDE SEQUENCE [MRNA]</scope>
    <source>
        <tissue>Leaf</tissue>
    </source>
</reference>
<name>CATA_SOLAP</name>
<accession>O24339</accession>
<comment type="function">
    <text evidence="2">Catalyzes the degradation of hydrogen peroxide (H(2)O(2)) generated by peroxisomal oxidases to water and oxygen, thereby protecting cells from the toxic effects of hydrogen peroxide.</text>
</comment>
<comment type="catalytic activity">
    <reaction evidence="4">
        <text>2 H2O2 = O2 + 2 H2O</text>
        <dbReference type="Rhea" id="RHEA:20309"/>
        <dbReference type="ChEBI" id="CHEBI:15377"/>
        <dbReference type="ChEBI" id="CHEBI:15379"/>
        <dbReference type="ChEBI" id="CHEBI:16240"/>
        <dbReference type="EC" id="1.11.1.6"/>
    </reaction>
</comment>
<comment type="cofactor">
    <cofactor evidence="2">
        <name>heme</name>
        <dbReference type="ChEBI" id="CHEBI:30413"/>
    </cofactor>
</comment>
<comment type="subunit">
    <text evidence="1">Homotetramer.</text>
</comment>
<comment type="subcellular location">
    <subcellularLocation>
        <location evidence="3">Cytoplasm</location>
        <location evidence="3">Cytosol</location>
    </subcellularLocation>
    <subcellularLocation>
        <location evidence="3">Peroxisome matrix</location>
    </subcellularLocation>
</comment>
<comment type="similarity">
    <text evidence="5">Belongs to the catalase family.</text>
</comment>
<feature type="chain" id="PRO_0000084959" description="Catalase">
    <location>
        <begin position="1"/>
        <end position="492"/>
    </location>
</feature>
<feature type="active site" evidence="4">
    <location>
        <position position="65"/>
    </location>
</feature>
<feature type="active site" evidence="4">
    <location>
        <position position="138"/>
    </location>
</feature>
<feature type="binding site" description="axial binding residue" evidence="2">
    <location>
        <position position="348"/>
    </location>
    <ligand>
        <name>heme</name>
        <dbReference type="ChEBI" id="CHEBI:30413"/>
    </ligand>
    <ligandPart>
        <name>Fe</name>
        <dbReference type="ChEBI" id="CHEBI:18248"/>
    </ligandPart>
</feature>